<dbReference type="EC" id="1.1.3.15" evidence="3"/>
<dbReference type="EMBL" id="CM000132">
    <property type="protein sequence ID" value="EEC82445.1"/>
    <property type="status" value="ALT_SEQ"/>
    <property type="molecule type" value="Genomic_DNA"/>
</dbReference>
<dbReference type="STRING" id="39946.B8B8K5"/>
<dbReference type="HOGENOM" id="CLU_020639_6_1_1"/>
<dbReference type="UniPathway" id="UPA00199"/>
<dbReference type="Proteomes" id="UP000007015">
    <property type="component" value="Chromosome 7"/>
</dbReference>
<dbReference type="GO" id="GO:0005777">
    <property type="term" value="C:peroxisome"/>
    <property type="evidence" value="ECO:0000250"/>
    <property type="project" value="UniProtKB"/>
</dbReference>
<dbReference type="GO" id="GO:0003973">
    <property type="term" value="F:(S)-2-hydroxy-acid oxidase activity"/>
    <property type="evidence" value="ECO:0000250"/>
    <property type="project" value="UniProtKB"/>
</dbReference>
<dbReference type="GO" id="GO:0010181">
    <property type="term" value="F:FMN binding"/>
    <property type="evidence" value="ECO:0007669"/>
    <property type="project" value="InterPro"/>
</dbReference>
<dbReference type="GO" id="GO:0006631">
    <property type="term" value="P:fatty acid metabolic process"/>
    <property type="evidence" value="ECO:0007669"/>
    <property type="project" value="UniProtKB-UniPathway"/>
</dbReference>
<dbReference type="GO" id="GO:0009853">
    <property type="term" value="P:photorespiration"/>
    <property type="evidence" value="ECO:0000250"/>
    <property type="project" value="UniProtKB"/>
</dbReference>
<dbReference type="GO" id="GO:0010109">
    <property type="term" value="P:regulation of photosynthesis"/>
    <property type="evidence" value="ECO:0000250"/>
    <property type="project" value="UniProtKB"/>
</dbReference>
<dbReference type="GO" id="GO:0051707">
    <property type="term" value="P:response to other organism"/>
    <property type="evidence" value="ECO:0007669"/>
    <property type="project" value="UniProtKB-ARBA"/>
</dbReference>
<dbReference type="GO" id="GO:0046718">
    <property type="term" value="P:symbiont entry into host cell"/>
    <property type="evidence" value="ECO:0000250"/>
    <property type="project" value="UniProtKB"/>
</dbReference>
<dbReference type="CDD" id="cd02809">
    <property type="entry name" value="alpha_hydroxyacid_oxid_FMN"/>
    <property type="match status" value="1"/>
</dbReference>
<dbReference type="FunFam" id="3.20.20.70:FF:000204">
    <property type="entry name" value="Peroxisomal (S)-2-hydroxy-acid oxidase GLO4"/>
    <property type="match status" value="1"/>
</dbReference>
<dbReference type="Gene3D" id="3.20.20.70">
    <property type="entry name" value="Aldolase class I"/>
    <property type="match status" value="1"/>
</dbReference>
<dbReference type="InterPro" id="IPR013785">
    <property type="entry name" value="Aldolase_TIM"/>
</dbReference>
<dbReference type="InterPro" id="IPR012133">
    <property type="entry name" value="Alpha-hydoxy_acid_DH_FMN"/>
</dbReference>
<dbReference type="InterPro" id="IPR000262">
    <property type="entry name" value="FMN-dep_DH"/>
</dbReference>
<dbReference type="InterPro" id="IPR037396">
    <property type="entry name" value="FMN_HAD"/>
</dbReference>
<dbReference type="InterPro" id="IPR008259">
    <property type="entry name" value="FMN_hydac_DH_AS"/>
</dbReference>
<dbReference type="PANTHER" id="PTHR10578:SF67">
    <property type="entry name" value="PEROXISOMAL (S)-2-HYDROXYACID OXIDASE GLO3"/>
    <property type="match status" value="1"/>
</dbReference>
<dbReference type="PANTHER" id="PTHR10578">
    <property type="entry name" value="S -2-HYDROXY-ACID OXIDASE-RELATED"/>
    <property type="match status" value="1"/>
</dbReference>
<dbReference type="Pfam" id="PF01070">
    <property type="entry name" value="FMN_dh"/>
    <property type="match status" value="1"/>
</dbReference>
<dbReference type="PIRSF" id="PIRSF000138">
    <property type="entry name" value="Al-hdrx_acd_dh"/>
    <property type="match status" value="1"/>
</dbReference>
<dbReference type="SMART" id="SM01240">
    <property type="entry name" value="IMPDH"/>
    <property type="match status" value="1"/>
</dbReference>
<dbReference type="SUPFAM" id="SSF51395">
    <property type="entry name" value="FMN-linked oxidoreductases"/>
    <property type="match status" value="1"/>
</dbReference>
<dbReference type="PROSITE" id="PS00557">
    <property type="entry name" value="FMN_HYDROXY_ACID_DH_1"/>
    <property type="match status" value="1"/>
</dbReference>
<dbReference type="PROSITE" id="PS51349">
    <property type="entry name" value="FMN_HYDROXY_ACID_DH_2"/>
    <property type="match status" value="1"/>
</dbReference>
<gene>
    <name type="primary">GLO4</name>
    <name type="ORF">OsI_26871</name>
</gene>
<proteinExistence type="inferred from homology"/>
<reference key="1">
    <citation type="journal article" date="2005" name="PLoS Biol.">
        <title>The genomes of Oryza sativa: a history of duplications.</title>
        <authorList>
            <person name="Yu J."/>
            <person name="Wang J."/>
            <person name="Lin W."/>
            <person name="Li S."/>
            <person name="Li H."/>
            <person name="Zhou J."/>
            <person name="Ni P."/>
            <person name="Dong W."/>
            <person name="Hu S."/>
            <person name="Zeng C."/>
            <person name="Zhang J."/>
            <person name="Zhang Y."/>
            <person name="Li R."/>
            <person name="Xu Z."/>
            <person name="Li S."/>
            <person name="Li X."/>
            <person name="Zheng H."/>
            <person name="Cong L."/>
            <person name="Lin L."/>
            <person name="Yin J."/>
            <person name="Geng J."/>
            <person name="Li G."/>
            <person name="Shi J."/>
            <person name="Liu J."/>
            <person name="Lv H."/>
            <person name="Li J."/>
            <person name="Wang J."/>
            <person name="Deng Y."/>
            <person name="Ran L."/>
            <person name="Shi X."/>
            <person name="Wang X."/>
            <person name="Wu Q."/>
            <person name="Li C."/>
            <person name="Ren X."/>
            <person name="Wang J."/>
            <person name="Wang X."/>
            <person name="Li D."/>
            <person name="Liu D."/>
            <person name="Zhang X."/>
            <person name="Ji Z."/>
            <person name="Zhao W."/>
            <person name="Sun Y."/>
            <person name="Zhang Z."/>
            <person name="Bao J."/>
            <person name="Han Y."/>
            <person name="Dong L."/>
            <person name="Ji J."/>
            <person name="Chen P."/>
            <person name="Wu S."/>
            <person name="Liu J."/>
            <person name="Xiao Y."/>
            <person name="Bu D."/>
            <person name="Tan J."/>
            <person name="Yang L."/>
            <person name="Ye C."/>
            <person name="Zhang J."/>
            <person name="Xu J."/>
            <person name="Zhou Y."/>
            <person name="Yu Y."/>
            <person name="Zhang B."/>
            <person name="Zhuang S."/>
            <person name="Wei H."/>
            <person name="Liu B."/>
            <person name="Lei M."/>
            <person name="Yu H."/>
            <person name="Li Y."/>
            <person name="Xu H."/>
            <person name="Wei S."/>
            <person name="He X."/>
            <person name="Fang L."/>
            <person name="Zhang Z."/>
            <person name="Zhang Y."/>
            <person name="Huang X."/>
            <person name="Su Z."/>
            <person name="Tong W."/>
            <person name="Li J."/>
            <person name="Tong Z."/>
            <person name="Li S."/>
            <person name="Ye J."/>
            <person name="Wang L."/>
            <person name="Fang L."/>
            <person name="Lei T."/>
            <person name="Chen C.-S."/>
            <person name="Chen H.-C."/>
            <person name="Xu Z."/>
            <person name="Li H."/>
            <person name="Huang H."/>
            <person name="Zhang F."/>
            <person name="Xu H."/>
            <person name="Li N."/>
            <person name="Zhao C."/>
            <person name="Li S."/>
            <person name="Dong L."/>
            <person name="Huang Y."/>
            <person name="Li L."/>
            <person name="Xi Y."/>
            <person name="Qi Q."/>
            <person name="Li W."/>
            <person name="Zhang B."/>
            <person name="Hu W."/>
            <person name="Zhang Y."/>
            <person name="Tian X."/>
            <person name="Jiao Y."/>
            <person name="Liang X."/>
            <person name="Jin J."/>
            <person name="Gao L."/>
            <person name="Zheng W."/>
            <person name="Hao B."/>
            <person name="Liu S.-M."/>
            <person name="Wang W."/>
            <person name="Yuan L."/>
            <person name="Cao M."/>
            <person name="McDermott J."/>
            <person name="Samudrala R."/>
            <person name="Wang J."/>
            <person name="Wong G.K.-S."/>
            <person name="Yang H."/>
        </authorList>
    </citation>
    <scope>NUCLEOTIDE SEQUENCE [LARGE SCALE GENOMIC DNA]</scope>
    <source>
        <strain>cv. 93-11</strain>
    </source>
</reference>
<sequence>MEDNLPVNVREYQELAKKALPKMAYDYINGGAEDEHTLRENIAAYTRIILRPRVLVDVSKIDMSTTLLGYTMRSPIIVAPTGGHKLAHPEGEKATARAAASCNAIMVLSFSSSCKIEDVASSCNAIRFYQLYVYKNRNVSATLVRRAESCGFKALLLTVDTPMLGRREADIRNKMVFPRSGNLEGLMTIDDHDTTNGSQLERFARATLDPSLSWKDIEWLKSITSMPIFLKGIVTAEDARRAVEAGVAGVIVSNHGARQLDYAPATIAALEEVVRAVAGAVPVLVDGGIRRGTDVFKALALGARAVMXXXPVFFGLAARGEAGARHVIEMLNGELEVAMALCGCRSVGEITRSHVMTEGDRIRSLL</sequence>
<organism>
    <name type="scientific">Oryza sativa subsp. indica</name>
    <name type="common">Rice</name>
    <dbReference type="NCBI Taxonomy" id="39946"/>
    <lineage>
        <taxon>Eukaryota</taxon>
        <taxon>Viridiplantae</taxon>
        <taxon>Streptophyta</taxon>
        <taxon>Embryophyta</taxon>
        <taxon>Tracheophyta</taxon>
        <taxon>Spermatophyta</taxon>
        <taxon>Magnoliopsida</taxon>
        <taxon>Liliopsida</taxon>
        <taxon>Poales</taxon>
        <taxon>Poaceae</taxon>
        <taxon>BOP clade</taxon>
        <taxon>Oryzoideae</taxon>
        <taxon>Oryzeae</taxon>
        <taxon>Oryzinae</taxon>
        <taxon>Oryza</taxon>
        <taxon>Oryza sativa</taxon>
    </lineage>
</organism>
<comment type="function">
    <text evidence="3">Oxidase that catalyzes the oxidation of a broad range of 2-hydroxyacids to the corresponding 2-oxoacids, with a reduction of O2 to H2O2. May be involved in a general medium- and long-chain fatty acid catabolic pathway such as alpha-oxidation.</text>
</comment>
<comment type="catalytic activity">
    <reaction evidence="3">
        <text>a (2S)-2-hydroxycarboxylate + O2 = a 2-oxocarboxylate + H2O2</text>
        <dbReference type="Rhea" id="RHEA:16789"/>
        <dbReference type="ChEBI" id="CHEBI:15379"/>
        <dbReference type="ChEBI" id="CHEBI:16240"/>
        <dbReference type="ChEBI" id="CHEBI:35179"/>
        <dbReference type="ChEBI" id="CHEBI:58123"/>
        <dbReference type="EC" id="1.1.3.15"/>
    </reaction>
    <physiologicalReaction direction="left-to-right" evidence="3">
        <dbReference type="Rhea" id="RHEA:16790"/>
    </physiologicalReaction>
</comment>
<comment type="cofactor">
    <cofactor evidence="2">
        <name>FMN</name>
        <dbReference type="ChEBI" id="CHEBI:58210"/>
    </cofactor>
</comment>
<comment type="pathway">
    <text evidence="3">Lipid metabolism; fatty acid metabolism.</text>
</comment>
<comment type="subunit">
    <text evidence="2">Homotetramer.</text>
</comment>
<comment type="subcellular location">
    <subcellularLocation>
        <location evidence="1">Peroxisome</location>
    </subcellularLocation>
</comment>
<comment type="similarity">
    <text evidence="5">Belongs to the FMN-dependent alpha-hydroxy acid dehydrogenase family.</text>
</comment>
<comment type="sequence caution" evidence="6">
    <conflict type="erroneous gene model prediction">
        <sequence resource="EMBL-CDS" id="EEC82445"/>
    </conflict>
</comment>
<keyword id="KW-0276">Fatty acid metabolism</keyword>
<keyword id="KW-0285">Flavoprotein</keyword>
<keyword id="KW-0288">FMN</keyword>
<keyword id="KW-0443">Lipid metabolism</keyword>
<keyword id="KW-0560">Oxidoreductase</keyword>
<keyword id="KW-0576">Peroxisome</keyword>
<keyword id="KW-1185">Reference proteome</keyword>
<name>HAOX_ORYSI</name>
<evidence type="ECO:0000250" key="1"/>
<evidence type="ECO:0000250" key="2">
    <source>
        <dbReference type="UniProtKB" id="P05414"/>
    </source>
</evidence>
<evidence type="ECO:0000250" key="3">
    <source>
        <dbReference type="UniProtKB" id="Q9LJH5"/>
    </source>
</evidence>
<evidence type="ECO:0000255" key="4"/>
<evidence type="ECO:0000255" key="5">
    <source>
        <dbReference type="PROSITE-ProRule" id="PRU00683"/>
    </source>
</evidence>
<evidence type="ECO:0000305" key="6"/>
<protein>
    <recommendedName>
        <fullName>Peroxisomal (S)-2-hydroxy-acid oxidase GLO4</fullName>
        <ecNumber evidence="3">1.1.3.15</ecNumber>
    </recommendedName>
    <alternativeName>
        <fullName>Glycolate oxidase 4</fullName>
        <shortName>GOX 4</shortName>
        <shortName>OsGLO4</shortName>
    </alternativeName>
    <alternativeName>
        <fullName>Short chain alpha-hydroxy acid oxidase GLO4</fullName>
    </alternativeName>
</protein>
<feature type="chain" id="PRO_0000403416" description="Peroxisomal (S)-2-hydroxy-acid oxidase GLO4">
    <location>
        <begin position="1"/>
        <end position="366"/>
    </location>
</feature>
<feature type="domain" description="FMN hydroxy acid dehydrogenase" evidence="5">
    <location>
        <begin position="1"/>
        <end position="360"/>
    </location>
</feature>
<feature type="short sequence motif" description="Microbody targeting signal" evidence="4">
    <location>
        <begin position="364"/>
        <end position="366"/>
    </location>
</feature>
<feature type="active site" description="Proton acceptor" evidence="2">
    <location>
        <position position="255"/>
    </location>
</feature>
<feature type="binding site" evidence="5">
    <location>
        <position position="27"/>
    </location>
    <ligand>
        <name>a 2-oxocarboxylate</name>
        <dbReference type="ChEBI" id="CHEBI:35179"/>
    </ligand>
</feature>
<feature type="binding site" evidence="2">
    <location>
        <begin position="80"/>
        <end position="82"/>
    </location>
    <ligand>
        <name>FMN</name>
        <dbReference type="ChEBI" id="CHEBI:58210"/>
    </ligand>
</feature>
<feature type="binding site" evidence="2">
    <location>
        <position position="109"/>
    </location>
    <ligand>
        <name>FMN</name>
        <dbReference type="ChEBI" id="CHEBI:58210"/>
    </ligand>
</feature>
<feature type="binding site" evidence="2">
    <location>
        <begin position="130"/>
        <end position="132"/>
    </location>
    <ligand>
        <name>FMN</name>
        <dbReference type="ChEBI" id="CHEBI:58210"/>
    </ligand>
</feature>
<feature type="binding site" evidence="5">
    <location>
        <position position="132"/>
    </location>
    <ligand>
        <name>a 2-oxocarboxylate</name>
        <dbReference type="ChEBI" id="CHEBI:35179"/>
    </ligand>
</feature>
<feature type="binding site" evidence="2">
    <location>
        <position position="158"/>
    </location>
    <ligand>
        <name>FMN</name>
        <dbReference type="ChEBI" id="CHEBI:58210"/>
    </ligand>
</feature>
<feature type="binding site" evidence="5">
    <location>
        <position position="167"/>
    </location>
    <ligand>
        <name>a 2-oxocarboxylate</name>
        <dbReference type="ChEBI" id="CHEBI:35179"/>
    </ligand>
</feature>
<feature type="binding site" evidence="2">
    <location>
        <position position="231"/>
    </location>
    <ligand>
        <name>FMN</name>
        <dbReference type="ChEBI" id="CHEBI:58210"/>
    </ligand>
</feature>
<feature type="binding site" evidence="2">
    <location>
        <position position="253"/>
    </location>
    <ligand>
        <name>FMN</name>
        <dbReference type="ChEBI" id="CHEBI:58210"/>
    </ligand>
</feature>
<feature type="binding site" evidence="5">
    <location>
        <position position="258"/>
    </location>
    <ligand>
        <name>a 2-oxocarboxylate</name>
        <dbReference type="ChEBI" id="CHEBI:35179"/>
    </ligand>
</feature>
<feature type="binding site" evidence="2">
    <location>
        <begin position="286"/>
        <end position="290"/>
    </location>
    <ligand>
        <name>FMN</name>
        <dbReference type="ChEBI" id="CHEBI:58210"/>
    </ligand>
</feature>
<feature type="binding site" evidence="2">
    <location>
        <begin position="309"/>
        <end position="310"/>
    </location>
    <ligand>
        <name>FMN</name>
        <dbReference type="ChEBI" id="CHEBI:58210"/>
    </ligand>
</feature>
<accession>B8B8K5</accession>